<sequence>MGFSAGDSKKGANLFKTRCAQCHTLEEGGGNKIGPALHGLFGRKTGSVDGYAYTDANKQKGITWDENTLFEYLENPKKYIPGTKMAFGGLKKDKDRNDIITFMKEATA</sequence>
<keyword id="KW-0903">Direct protein sequencing</keyword>
<keyword id="KW-0249">Electron transport</keyword>
<keyword id="KW-0349">Heme</keyword>
<keyword id="KW-0408">Iron</keyword>
<keyword id="KW-0479">Metal-binding</keyword>
<keyword id="KW-0488">Methylation</keyword>
<keyword id="KW-0496">Mitochondrion</keyword>
<keyword id="KW-1185">Reference proteome</keyword>
<keyword id="KW-0679">Respiratory chain</keyword>
<keyword id="KW-0813">Transport</keyword>
<feature type="initiator methionine" description="Removed" evidence="3 4">
    <location>
        <position position="1"/>
    </location>
</feature>
<feature type="chain" id="PRO_0000108328" description="Cytochrome c">
    <location>
        <begin position="2"/>
        <end position="108"/>
    </location>
</feature>
<feature type="binding site" description="covalent">
    <location>
        <position position="19"/>
    </location>
    <ligand>
        <name>heme c</name>
        <dbReference type="ChEBI" id="CHEBI:61717"/>
    </ligand>
</feature>
<feature type="binding site" description="covalent">
    <location>
        <position position="22"/>
    </location>
    <ligand>
        <name>heme c</name>
        <dbReference type="ChEBI" id="CHEBI:61717"/>
    </ligand>
</feature>
<feature type="binding site" description="axial binding residue">
    <location>
        <position position="23"/>
    </location>
    <ligand>
        <name>heme c</name>
        <dbReference type="ChEBI" id="CHEBI:61717"/>
    </ligand>
    <ligandPart>
        <name>Fe</name>
        <dbReference type="ChEBI" id="CHEBI:18248"/>
    </ligandPart>
</feature>
<feature type="binding site" description="axial binding residue">
    <location>
        <position position="85"/>
    </location>
    <ligand>
        <name>heme c</name>
        <dbReference type="ChEBI" id="CHEBI:61717"/>
    </ligand>
    <ligandPart>
        <name>Fe</name>
        <dbReference type="ChEBI" id="CHEBI:18248"/>
    </ligandPart>
</feature>
<feature type="modified residue" description="N6,N6,N6-trimethyllysine" evidence="2">
    <location>
        <position position="77"/>
    </location>
</feature>
<feature type="sequence variant" description="In cyt-12-12/cyc-1-1; characterized by slow growth and a deficiency of spectrophotometrically-detectable cytochromes aa3 and c." evidence="1 5">
    <original>G</original>
    <variation>D</variation>
    <location>
        <position position="11"/>
    </location>
</feature>
<feature type="sequence conflict" description="In Ref. 5; AA sequence." evidence="6" ref="5">
    <original>Q</original>
    <variation>E</variation>
    <location>
        <position position="21"/>
    </location>
</feature>
<feature type="sequence conflict" description="In Ref. 5; AA sequence." evidence="6" ref="5">
    <original>TLEEGGGN</original>
    <variation>GEGGNLTQ</variation>
    <location>
        <begin position="24"/>
        <end position="31"/>
    </location>
</feature>
<dbReference type="EMBL" id="X05506">
    <property type="protein sequence ID" value="CAA29050.1"/>
    <property type="molecule type" value="mRNA"/>
</dbReference>
<dbReference type="EMBL" id="L19358">
    <property type="protein sequence ID" value="AAA92156.1"/>
    <property type="molecule type" value="Genomic_DNA"/>
</dbReference>
<dbReference type="EMBL" id="X05507">
    <property type="protein sequence ID" value="CAA29051.1"/>
    <property type="molecule type" value="Genomic_DNA"/>
</dbReference>
<dbReference type="EMBL" id="AL669998">
    <property type="protein sequence ID" value="CAD21169.1"/>
    <property type="molecule type" value="Genomic_DNA"/>
</dbReference>
<dbReference type="EMBL" id="CM002237">
    <property type="protein sequence ID" value="EAA27250.2"/>
    <property type="molecule type" value="Genomic_DNA"/>
</dbReference>
<dbReference type="PIR" id="S48221">
    <property type="entry name" value="CCNC"/>
</dbReference>
<dbReference type="RefSeq" id="XP_956486.2">
    <property type="nucleotide sequence ID" value="XM_951393.3"/>
</dbReference>
<dbReference type="SMR" id="P00048"/>
<dbReference type="FunCoup" id="P00048">
    <property type="interactions" value="553"/>
</dbReference>
<dbReference type="STRING" id="367110.P00048"/>
<dbReference type="PaxDb" id="5141-EFNCRP00000001740"/>
<dbReference type="EnsemblFungi" id="EAA27250">
    <property type="protein sequence ID" value="EAA27250"/>
    <property type="gene ID" value="NCU01808"/>
</dbReference>
<dbReference type="GeneID" id="3872635"/>
<dbReference type="KEGG" id="ncr:NCU01808"/>
<dbReference type="VEuPathDB" id="FungiDB:NCU01808"/>
<dbReference type="HOGENOM" id="CLU_060944_3_0_1"/>
<dbReference type="InParanoid" id="P00048"/>
<dbReference type="OrthoDB" id="449280at2759"/>
<dbReference type="Proteomes" id="UP000001805">
    <property type="component" value="Chromosome 6, Linkage Group II"/>
</dbReference>
<dbReference type="GO" id="GO:0005758">
    <property type="term" value="C:mitochondrial intermembrane space"/>
    <property type="evidence" value="ECO:0000318"/>
    <property type="project" value="GO_Central"/>
</dbReference>
<dbReference type="GO" id="GO:0009055">
    <property type="term" value="F:electron transfer activity"/>
    <property type="evidence" value="ECO:0000318"/>
    <property type="project" value="GO_Central"/>
</dbReference>
<dbReference type="GO" id="GO:0020037">
    <property type="term" value="F:heme binding"/>
    <property type="evidence" value="ECO:0007669"/>
    <property type="project" value="InterPro"/>
</dbReference>
<dbReference type="GO" id="GO:0046872">
    <property type="term" value="F:metal ion binding"/>
    <property type="evidence" value="ECO:0007669"/>
    <property type="project" value="UniProtKB-KW"/>
</dbReference>
<dbReference type="GO" id="GO:0006123">
    <property type="term" value="P:mitochondrial electron transport, cytochrome c to oxygen"/>
    <property type="evidence" value="ECO:0000318"/>
    <property type="project" value="GO_Central"/>
</dbReference>
<dbReference type="GO" id="GO:0006122">
    <property type="term" value="P:mitochondrial electron transport, ubiquinol to cytochrome c"/>
    <property type="evidence" value="ECO:0000318"/>
    <property type="project" value="GO_Central"/>
</dbReference>
<dbReference type="FunFam" id="1.10.760.10:FF:000001">
    <property type="entry name" value="Cytochrome c iso-1"/>
    <property type="match status" value="1"/>
</dbReference>
<dbReference type="Gene3D" id="1.10.760.10">
    <property type="entry name" value="Cytochrome c-like domain"/>
    <property type="match status" value="1"/>
</dbReference>
<dbReference type="InterPro" id="IPR009056">
    <property type="entry name" value="Cyt_c-like_dom"/>
</dbReference>
<dbReference type="InterPro" id="IPR036909">
    <property type="entry name" value="Cyt_c-like_dom_sf"/>
</dbReference>
<dbReference type="InterPro" id="IPR002327">
    <property type="entry name" value="Cyt_c_1A/1B"/>
</dbReference>
<dbReference type="PANTHER" id="PTHR11961">
    <property type="entry name" value="CYTOCHROME C"/>
    <property type="match status" value="1"/>
</dbReference>
<dbReference type="Pfam" id="PF00034">
    <property type="entry name" value="Cytochrom_C"/>
    <property type="match status" value="1"/>
</dbReference>
<dbReference type="PRINTS" id="PR00604">
    <property type="entry name" value="CYTCHRMECIAB"/>
</dbReference>
<dbReference type="SUPFAM" id="SSF46626">
    <property type="entry name" value="Cytochrome c"/>
    <property type="match status" value="1"/>
</dbReference>
<dbReference type="PROSITE" id="PS51007">
    <property type="entry name" value="CYTC"/>
    <property type="match status" value="1"/>
</dbReference>
<reference key="1">
    <citation type="journal article" date="1987" name="EMBO J.">
        <title>Deficiency in mRNA splicing in a cytochrome c mutant of Neurospora crassa: importance of carboxy terminus for import of apocytochrome c into mitochondria.</title>
        <authorList>
            <person name="Stuart R.A."/>
            <person name="Neupert W."/>
            <person name="Tropschug M."/>
        </authorList>
    </citation>
    <scope>NUCLEOTIDE SEQUENCE [GENOMIC DNA / MRNA]</scope>
    <scope>VARIANT ASP-11</scope>
    <source>
        <strain>74A</strain>
    </source>
</reference>
<reference key="2">
    <citation type="journal article" date="1994" name="Curr. Genet.">
        <title>Mutations in the structural gene for cytochrome c result in deficiency of both cytochromes aa3 and c in Neurospora crassa.</title>
        <authorList>
            <person name="Bottorff D.A."/>
            <person name="Parmaksizoglu S."/>
            <person name="Lemire E.G."/>
            <person name="Coffin J.W."/>
            <person name="Bertrand H."/>
            <person name="Nargang F.E."/>
        </authorList>
    </citation>
    <scope>NUCLEOTIDE SEQUENCE [GENOMIC DNA]</scope>
    <scope>VARIANT ASP-11</scope>
</reference>
<reference key="3">
    <citation type="journal article" date="2003" name="Nucleic Acids Res.">
        <title>What's in the genome of a filamentous fungus? Analysis of the Neurospora genome sequence.</title>
        <authorList>
            <person name="Mannhaupt G."/>
            <person name="Montrone C."/>
            <person name="Haase D."/>
            <person name="Mewes H.-W."/>
            <person name="Aign V."/>
            <person name="Hoheisel J.D."/>
            <person name="Fartmann B."/>
            <person name="Nyakatura G."/>
            <person name="Kempken F."/>
            <person name="Maier J."/>
            <person name="Schulte U."/>
        </authorList>
    </citation>
    <scope>NUCLEOTIDE SEQUENCE [LARGE SCALE GENOMIC DNA]</scope>
    <source>
        <strain>ATCC 24698 / 74-OR23-1A / CBS 708.71 / DSM 1257 / FGSC 987</strain>
    </source>
</reference>
<reference key="4">
    <citation type="journal article" date="2003" name="Nature">
        <title>The genome sequence of the filamentous fungus Neurospora crassa.</title>
        <authorList>
            <person name="Galagan J.E."/>
            <person name="Calvo S.E."/>
            <person name="Borkovich K.A."/>
            <person name="Selker E.U."/>
            <person name="Read N.D."/>
            <person name="Jaffe D.B."/>
            <person name="FitzHugh W."/>
            <person name="Ma L.-J."/>
            <person name="Smirnov S."/>
            <person name="Purcell S."/>
            <person name="Rehman B."/>
            <person name="Elkins T."/>
            <person name="Engels R."/>
            <person name="Wang S."/>
            <person name="Nielsen C.B."/>
            <person name="Butler J."/>
            <person name="Endrizzi M."/>
            <person name="Qui D."/>
            <person name="Ianakiev P."/>
            <person name="Bell-Pedersen D."/>
            <person name="Nelson M.A."/>
            <person name="Werner-Washburne M."/>
            <person name="Selitrennikoff C.P."/>
            <person name="Kinsey J.A."/>
            <person name="Braun E.L."/>
            <person name="Zelter A."/>
            <person name="Schulte U."/>
            <person name="Kothe G.O."/>
            <person name="Jedd G."/>
            <person name="Mewes H.-W."/>
            <person name="Staben C."/>
            <person name="Marcotte E."/>
            <person name="Greenberg D."/>
            <person name="Roy A."/>
            <person name="Foley K."/>
            <person name="Naylor J."/>
            <person name="Stange-Thomann N."/>
            <person name="Barrett R."/>
            <person name="Gnerre S."/>
            <person name="Kamal M."/>
            <person name="Kamvysselis M."/>
            <person name="Mauceli E.W."/>
            <person name="Bielke C."/>
            <person name="Rudd S."/>
            <person name="Frishman D."/>
            <person name="Krystofova S."/>
            <person name="Rasmussen C."/>
            <person name="Metzenberg R.L."/>
            <person name="Perkins D.D."/>
            <person name="Kroken S."/>
            <person name="Cogoni C."/>
            <person name="Macino G."/>
            <person name="Catcheside D.E.A."/>
            <person name="Li W."/>
            <person name="Pratt R.J."/>
            <person name="Osmani S.A."/>
            <person name="DeSouza C.P.C."/>
            <person name="Glass N.L."/>
            <person name="Orbach M.J."/>
            <person name="Berglund J.A."/>
            <person name="Voelker R."/>
            <person name="Yarden O."/>
            <person name="Plamann M."/>
            <person name="Seiler S."/>
            <person name="Dunlap J.C."/>
            <person name="Radford A."/>
            <person name="Aramayo R."/>
            <person name="Natvig D.O."/>
            <person name="Alex L.A."/>
            <person name="Mannhaupt G."/>
            <person name="Ebbole D.J."/>
            <person name="Freitag M."/>
            <person name="Paulsen I."/>
            <person name="Sachs M.S."/>
            <person name="Lander E.S."/>
            <person name="Nusbaum C."/>
            <person name="Birren B.W."/>
        </authorList>
    </citation>
    <scope>NUCLEOTIDE SEQUENCE [LARGE SCALE GENOMIC DNA]</scope>
    <source>
        <strain>ATCC 24698 / 74-OR23-1A / CBS 708.71 / DSM 1257 / FGSC 987</strain>
    </source>
</reference>
<reference key="5">
    <citation type="journal article" date="1966" name="J. Biol. Chem.">
        <title>Neurospora crassa cytochrome c. II. Chymotryptic peptides, tryptic peptides, cyanogen bromide peptides, and the complete amino acid sequence.</title>
        <authorList>
            <person name="Heller J."/>
            <person name="Smith E.L."/>
        </authorList>
    </citation>
    <scope>PROTEIN SEQUENCE OF 2-108</scope>
</reference>
<reference key="6">
    <citation type="journal article" date="1974" name="Biochem. Biophys. Res. Commun.">
        <title>Neurospora crassa and Humicola lanuginosa cytochromes c: more homology in the heme region.</title>
        <authorList>
            <person name="Lederer F."/>
            <person name="Simon A.M."/>
        </authorList>
    </citation>
    <scope>PROTEIN SEQUENCE OF 2-44</scope>
</reference>
<reference key="7">
    <citation type="journal article" date="1969" name="J. Biol. Chem.">
        <title>Presence and location of an unusual amino acid, epsilon-N-trimethyllysine, in cytochrome c of wheat germ and Neurospora.</title>
        <authorList>
            <person name="Delange R.J."/>
            <person name="Glazer A.N."/>
            <person name="Smith E.L."/>
        </authorList>
    </citation>
    <scope>METHYLATION AT LYS-77</scope>
</reference>
<accession>P00048</accession>
<accession>Q7RV53</accession>
<proteinExistence type="evidence at protein level"/>
<organism>
    <name type="scientific">Neurospora crassa (strain ATCC 24698 / 74-OR23-1A / CBS 708.71 / DSM 1257 / FGSC 987)</name>
    <dbReference type="NCBI Taxonomy" id="367110"/>
    <lineage>
        <taxon>Eukaryota</taxon>
        <taxon>Fungi</taxon>
        <taxon>Dikarya</taxon>
        <taxon>Ascomycota</taxon>
        <taxon>Pezizomycotina</taxon>
        <taxon>Sordariomycetes</taxon>
        <taxon>Sordariomycetidae</taxon>
        <taxon>Sordariales</taxon>
        <taxon>Sordariaceae</taxon>
        <taxon>Neurospora</taxon>
    </lineage>
</organism>
<comment type="function">
    <text>Electron carrier protein. The oxidized form of the cytochrome c heme group can accept an electron from the heme group of the cytochrome c1 subunit of cytochrome reductase. Cytochrome c then transfers this electron to the cytochrome oxidase complex, the final protein carrier in the mitochondrial electron-transport chain.</text>
</comment>
<comment type="subcellular location">
    <subcellularLocation>
        <location>Mitochondrion intermembrane space</location>
    </subcellularLocation>
    <text>Loosely associated with the inner membrane.</text>
</comment>
<comment type="PTM">
    <text>Binds 1 heme c group covalently per subunit.</text>
</comment>
<comment type="similarity">
    <text evidence="6">Belongs to the cytochrome c family.</text>
</comment>
<comment type="online information" name="Protein Spotlight">
    <link uri="https://www.proteinspotlight.org/back_issues/076"/>
    <text>Life shuttle - Issue 76 of November 2006</text>
</comment>
<gene>
    <name type="primary">cyc-1</name>
    <name type="synonym">cyt-12</name>
    <name type="ORF">B1K11.020</name>
    <name type="ORF">NCU01808</name>
</gene>
<name>CYC_NEUCR</name>
<evidence type="ECO:0000269" key="1">
    <source>
    </source>
</evidence>
<evidence type="ECO:0000269" key="2">
    <source>
    </source>
</evidence>
<evidence type="ECO:0000269" key="3">
    <source>
    </source>
</evidence>
<evidence type="ECO:0000269" key="4">
    <source>
    </source>
</evidence>
<evidence type="ECO:0000269" key="5">
    <source>
    </source>
</evidence>
<evidence type="ECO:0000305" key="6"/>
<protein>
    <recommendedName>
        <fullName>Cytochrome c</fullName>
    </recommendedName>
</protein>